<dbReference type="EMBL" id="X71410">
    <property type="protein sequence ID" value="CAA50534.1"/>
    <property type="molecule type" value="Genomic_DNA"/>
</dbReference>
<dbReference type="EMBL" id="U91581">
    <property type="protein sequence ID" value="AAC72257.1"/>
    <property type="molecule type" value="Genomic_DNA"/>
</dbReference>
<dbReference type="PIR" id="A47342">
    <property type="entry name" value="A47342"/>
</dbReference>
<dbReference type="SMR" id="P36499"/>
<dbReference type="TCDB" id="1.C.21.1.1">
    <property type="family name" value="the lacticin 481 (lacticin 481) family"/>
</dbReference>
<dbReference type="GO" id="GO:0005576">
    <property type="term" value="C:extracellular region"/>
    <property type="evidence" value="ECO:0007669"/>
    <property type="project" value="InterPro"/>
</dbReference>
<dbReference type="GO" id="GO:0005102">
    <property type="term" value="F:signaling receptor binding"/>
    <property type="evidence" value="ECO:0007669"/>
    <property type="project" value="UniProtKB-KW"/>
</dbReference>
<dbReference type="GO" id="GO:0042742">
    <property type="term" value="P:defense response to bacterium"/>
    <property type="evidence" value="ECO:0007669"/>
    <property type="project" value="UniProtKB-KW"/>
</dbReference>
<dbReference type="GO" id="GO:0031640">
    <property type="term" value="P:killing of cells of another organism"/>
    <property type="evidence" value="ECO:0007669"/>
    <property type="project" value="UniProtKB-KW"/>
</dbReference>
<dbReference type="InterPro" id="IPR007682">
    <property type="entry name" value="Lantibiotic_typ-A_Lactobact"/>
</dbReference>
<dbReference type="NCBIfam" id="NF040664">
    <property type="entry name" value="HEC_x9_TCC_lant"/>
    <property type="match status" value="1"/>
</dbReference>
<dbReference type="Pfam" id="PF04604">
    <property type="entry name" value="L_biotic_typeA"/>
    <property type="match status" value="1"/>
</dbReference>
<proteinExistence type="evidence at protein level"/>
<protein>
    <recommendedName>
        <fullName>Lantibiotic lacticin-481</fullName>
    </recommendedName>
    <alternativeName>
        <fullName>Lactococcin-DR</fullName>
    </alternativeName>
</protein>
<evidence type="ECO:0000269" key="1">
    <source>
    </source>
</evidence>
<evidence type="ECO:0000269" key="2">
    <source>
    </source>
</evidence>
<evidence type="ECO:0000269" key="3">
    <source>
    </source>
</evidence>
<evidence type="ECO:0000305" key="4"/>
<name>LAN4_LACLL</name>
<sequence>MKEQNSFNLLQEVTESELDLILGAKGGSGVIHTISHECNMNSWQFVFTCCS</sequence>
<organism>
    <name type="scientific">Lactococcus lactis subsp. lactis</name>
    <name type="common">Streptococcus lactis</name>
    <dbReference type="NCBI Taxonomy" id="1360"/>
    <lineage>
        <taxon>Bacteria</taxon>
        <taxon>Bacillati</taxon>
        <taxon>Bacillota</taxon>
        <taxon>Bacilli</taxon>
        <taxon>Lactobacillales</taxon>
        <taxon>Streptococcaceae</taxon>
        <taxon>Lactococcus</taxon>
    </lineage>
</organism>
<gene>
    <name type="primary">lctA</name>
    <name type="synonym">lcnDR1</name>
    <name type="synonym">lct</name>
</gene>
<feature type="propeptide" id="PRO_0000017120" evidence="1">
    <location>
        <begin position="1"/>
        <end position="24"/>
    </location>
</feature>
<feature type="peptide" id="PRO_0000017121" description="Lantibiotic lacticin-481">
    <location>
        <begin position="25"/>
        <end position="51"/>
    </location>
</feature>
<feature type="modified residue" description="(Z)-2,3-didehydrobutyrine" evidence="2">
    <location>
        <position position="48"/>
    </location>
</feature>
<feature type="cross-link" description="Beta-methyllanthionine (Thr-Cys)" evidence="2">
    <location>
        <begin position="33"/>
        <end position="38"/>
    </location>
</feature>
<feature type="cross-link" description="Lanthionine (Ser-Cys)" evidence="2 3">
    <location>
        <begin position="35"/>
        <end position="49"/>
    </location>
</feature>
<feature type="cross-link" description="Lanthionine (Ser-Cys)" evidence="2 3">
    <location>
        <begin position="42"/>
        <end position="50"/>
    </location>
</feature>
<accession>P36499</accession>
<keyword id="KW-0044">Antibiotic</keyword>
<keyword id="KW-0929">Antimicrobial</keyword>
<keyword id="KW-0078">Bacteriocin</keyword>
<keyword id="KW-0903">Direct protein sequencing</keyword>
<keyword id="KW-0425">Lantibiotic</keyword>
<keyword id="KW-0883">Thioether bond</keyword>
<reference key="1">
    <citation type="journal article" date="1993" name="J. Biol. Chem.">
        <title>Structure, organization, and expression of the lct gene for lacticin 481, a novel lantibiotic produced by Lactococcus lactis.</title>
        <authorList>
            <person name="Piard J.-C."/>
            <person name="Kuipers O.P."/>
            <person name="Rollema H.S."/>
            <person name="Desmazeaud M.J."/>
            <person name="de Vos W.M."/>
        </authorList>
    </citation>
    <scope>NUCLEOTIDE SEQUENCE [GENOMIC DNA]</scope>
    <scope>STRUCTURE BY NMR</scope>
    <scope>DEHYDRATION AT THR-48</scope>
    <scope>LANTHIONINE CROSS-LINKS</scope>
    <source>
        <strain>CNRZ 481</strain>
    </source>
</reference>
<reference key="2">
    <citation type="journal article" date="1994" name="Appl. Environ. Microbiol.">
        <title>Cloning, expression, and nucleotide sequence of genes involved in production of lactococcin DR, a bacteriocin from Lactococcus lactis subsp. lactis.</title>
        <authorList>
            <person name="Rince A."/>
            <person name="Dufour A."/>
            <person name="le Pogam S."/>
            <person name="Thuault D."/>
            <person name="Bourgeois C.M."/>
            <person name="Pennec J.P."/>
        </authorList>
    </citation>
    <scope>NUCLEOTIDE SEQUENCE [GENOMIC DNA]</scope>
    <source>
        <strain>ADRIA 85LO30</strain>
    </source>
</reference>
<reference key="3">
    <citation type="journal article" date="1992" name="Appl. Environ. Microbiol.">
        <title>Purification and partial characterization of lacticin 481, a lanthionine-containing bacteriocin produced by Lactococcus lactis subsp. lactis CNRZ 481.</title>
        <authorList>
            <person name="Piard J.-C."/>
            <person name="Muriana P.M."/>
            <person name="Desmazeaud M.J."/>
            <person name="Klaenhammer T.R."/>
        </authorList>
    </citation>
    <scope>PROTEIN SEQUENCE OF 25-31</scope>
    <source>
        <strain>CNRZ 481</strain>
    </source>
</reference>
<reference key="4">
    <citation type="journal article" date="1996" name="FEBS Lett.">
        <title>The structure of the lantibiotic lacticin 481 produced by Lactococcus lactis: location of the thioether bridges.</title>
        <authorList>
            <person name="van den Hooven H.W."/>
            <person name="Lagerwerf F.M."/>
            <person name="Heerma W."/>
            <person name="Haverkamp J."/>
            <person name="Piard J.-C."/>
            <person name="Hilbers C.W."/>
            <person name="Siezen R.J."/>
            <person name="Kuipers O.P."/>
            <person name="Rollema H.S."/>
        </authorList>
    </citation>
    <scope>THIOETHER BONDS</scope>
</reference>
<comment type="function">
    <text>Lanthionine-containing peptide antibiotic (lantibiotic) active on Gram-positive bacteria. The bactericidal activity of lantibiotics is based on depolarization of energized bacterial cytoplasmic membranes, initiated by the formation of aqueous transmembrane pores. Lacticin 481 is a broad spectrum bacteriocin exhibiting activity against a wide range of lactic acid bacteria and C.tyrobutyricum.</text>
</comment>
<comment type="subunit">
    <text>Monomer or homodimer.</text>
</comment>
<comment type="PTM">
    <text>Maturation of lantibiotics involves the enzymatic conversion of Thr, and Ser into dehydrated AA and the formation of thioether bonds with cysteine. This is followed by membrane translocation and cleavage of the modified precursor.</text>
</comment>
<comment type="PTM">
    <text evidence="2">It is established that the 2,3-didehydrobutyrine is the Z-isomer.</text>
</comment>
<comment type="similarity">
    <text evidence="4">Belongs to the type A lantibiotic family.</text>
</comment>